<gene>
    <name evidence="1" type="primary">citG</name>
    <name type="ordered locus">Spy49_0927c</name>
</gene>
<dbReference type="EC" id="2.4.2.52" evidence="1"/>
<dbReference type="EMBL" id="CP000829">
    <property type="protein sequence ID" value="ACI61233.1"/>
    <property type="molecule type" value="Genomic_DNA"/>
</dbReference>
<dbReference type="KEGG" id="soz:Spy49_0927c"/>
<dbReference type="HOGENOM" id="CLU_056179_1_0_9"/>
<dbReference type="Proteomes" id="UP000001039">
    <property type="component" value="Chromosome"/>
</dbReference>
<dbReference type="GO" id="GO:0005524">
    <property type="term" value="F:ATP binding"/>
    <property type="evidence" value="ECO:0007669"/>
    <property type="project" value="UniProtKB-KW"/>
</dbReference>
<dbReference type="GO" id="GO:0046917">
    <property type="term" value="F:triphosphoribosyl-dephospho-CoA synthase activity"/>
    <property type="evidence" value="ECO:0007669"/>
    <property type="project" value="UniProtKB-UniRule"/>
</dbReference>
<dbReference type="GO" id="GO:0051191">
    <property type="term" value="P:prosthetic group biosynthetic process"/>
    <property type="evidence" value="ECO:0007669"/>
    <property type="project" value="TreeGrafter"/>
</dbReference>
<dbReference type="Gene3D" id="1.10.4200.10">
    <property type="entry name" value="Triphosphoribosyl-dephospho-CoA protein"/>
    <property type="match status" value="1"/>
</dbReference>
<dbReference type="HAMAP" id="MF_00397">
    <property type="entry name" value="CitG"/>
    <property type="match status" value="1"/>
</dbReference>
<dbReference type="InterPro" id="IPR002736">
    <property type="entry name" value="CitG"/>
</dbReference>
<dbReference type="InterPro" id="IPR017551">
    <property type="entry name" value="TriPribosyl-deP-CoA_syn_CitG"/>
</dbReference>
<dbReference type="NCBIfam" id="TIGR03125">
    <property type="entry name" value="citrate_citG"/>
    <property type="match status" value="1"/>
</dbReference>
<dbReference type="PANTHER" id="PTHR30201:SF2">
    <property type="entry name" value="2-(5''-TRIPHOSPHORIBOSYL)-3'-DEPHOSPHOCOENZYME-A SYNTHASE"/>
    <property type="match status" value="1"/>
</dbReference>
<dbReference type="PANTHER" id="PTHR30201">
    <property type="entry name" value="TRIPHOSPHORIBOSYL-DEPHOSPHO-COA SYNTHASE"/>
    <property type="match status" value="1"/>
</dbReference>
<dbReference type="Pfam" id="PF01874">
    <property type="entry name" value="CitG"/>
    <property type="match status" value="1"/>
</dbReference>
<name>CITG_STRPZ</name>
<evidence type="ECO:0000255" key="1">
    <source>
        <dbReference type="HAMAP-Rule" id="MF_00397"/>
    </source>
</evidence>
<sequence length="294" mass="32725">MTKAVLTSISQLALKALLYEVSLSPKPGLVDRFDNGAHDDMSFMTFIDSMIALSPFFQAYIETGFAYAKEEPLLLFNRLRQLGQKAEETMFCATQGINTHKGLNFSMALLLGATGAYLARTPHLMTDLGCFSKEDTLAICRLVKSMTAHLIQTDLGHLNTKKEFTYGEQLFVTYGIKGPRGEASEGFTTLTDHALPYFRQMISQNDPETSQLRLLVYLMSIVEDGNLIHRGGIEAWKGVKADMRLLLQQDLSTTDLRLALSSYNQCLINQHLSPGGAADLLALTFYFAFLEKLL</sequence>
<comment type="catalytic activity">
    <reaction evidence="1">
        <text>3'-dephospho-CoA + ATP = 2'-(5''-triphospho-alpha-D-ribosyl)-3'-dephospho-CoA + adenine</text>
        <dbReference type="Rhea" id="RHEA:15117"/>
        <dbReference type="ChEBI" id="CHEBI:16708"/>
        <dbReference type="ChEBI" id="CHEBI:30616"/>
        <dbReference type="ChEBI" id="CHEBI:57328"/>
        <dbReference type="ChEBI" id="CHEBI:61378"/>
        <dbReference type="EC" id="2.4.2.52"/>
    </reaction>
</comment>
<comment type="similarity">
    <text evidence="1">Belongs to the CitG/MdcB family.</text>
</comment>
<keyword id="KW-0067">ATP-binding</keyword>
<keyword id="KW-0547">Nucleotide-binding</keyword>
<keyword id="KW-0808">Transferase</keyword>
<organism>
    <name type="scientific">Streptococcus pyogenes serotype M49 (strain NZ131)</name>
    <dbReference type="NCBI Taxonomy" id="471876"/>
    <lineage>
        <taxon>Bacteria</taxon>
        <taxon>Bacillati</taxon>
        <taxon>Bacillota</taxon>
        <taxon>Bacilli</taxon>
        <taxon>Lactobacillales</taxon>
        <taxon>Streptococcaceae</taxon>
        <taxon>Streptococcus</taxon>
    </lineage>
</organism>
<protein>
    <recommendedName>
        <fullName evidence="1">Probable 2-(5''-triphosphoribosyl)-3'-dephosphocoenzyme-A synthase</fullName>
        <shortName evidence="1">2-(5''-triphosphoribosyl)-3'-dephospho-CoA synthase</shortName>
        <ecNumber evidence="1">2.4.2.52</ecNumber>
    </recommendedName>
</protein>
<accession>B5XLM1</accession>
<feature type="chain" id="PRO_1000189596" description="Probable 2-(5''-triphosphoribosyl)-3'-dephosphocoenzyme-A synthase">
    <location>
        <begin position="1"/>
        <end position="294"/>
    </location>
</feature>
<reference key="1">
    <citation type="journal article" date="2008" name="J. Bacteriol.">
        <title>Genome sequence of a nephritogenic and highly transformable M49 strain of Streptococcus pyogenes.</title>
        <authorList>
            <person name="McShan W.M."/>
            <person name="Ferretti J.J."/>
            <person name="Karasawa T."/>
            <person name="Suvorov A.N."/>
            <person name="Lin S."/>
            <person name="Qin B."/>
            <person name="Jia H."/>
            <person name="Kenton S."/>
            <person name="Najar F."/>
            <person name="Wu H."/>
            <person name="Scott J."/>
            <person name="Roe B.A."/>
            <person name="Savic D.J."/>
        </authorList>
    </citation>
    <scope>NUCLEOTIDE SEQUENCE [LARGE SCALE GENOMIC DNA]</scope>
    <source>
        <strain>NZ131</strain>
    </source>
</reference>
<proteinExistence type="inferred from homology"/>